<sequence length="1588" mass="174807">MVQLAKVPILGNDIIHVGYNIHDHLVETIIKHCPSSTYVICNDTNLSKVPYYQQLVLEFKASLPEGSRLLTYVVKPGETSKSRETKAQLEDYLLVEGCTRDTVMVAIGGGVIGDMIGFVASTFMRGVRVVQVPTSLLAMVDSSIGGKTAIDTPLGKNFIGAFWQPKFVLVDIKWLETLAKREFINGMAEVIKTACIWNADEFTRLESNASLFLNVVNGAKNVKVTNQLTNEIDEISNTDIEAMLDHTYKLVLESIKVKAEVVSSDERESSLRNLLNFGHSIGHAYEAILTPQALHGECVSIGMVKEAELSRYFGILSPTQVARLSKILVAYGLPVSPDEKWFKELTLHKKTPLDILLKKMSIDKKNEGSKKKVVILESIGKCYGDSAQFVSDEDLRFILTDETLVYPFKDIPADQQKVVIPPGSKSISNRALILAALGEGQCKIKNLLHSDDTKHMLTAVHELKGATISWEDNGETVVVEGHGGSTLSACADPLYLGNAGTASRFLTSLAALVNSTPSQKYIVLTGNARMQQRPIAPLVDSLRANGTKIEYLNNEGSLPIKVYTDSVFKGGRIELAATVSSQYVSSILMCAPYAEEPVTLALVGGKPISKLYVDMTIKMMEKFGINVETSTTEPYTYYIPKGHYINPSEYVIESDASSATYPLAFAAMTGTTVTVPNIGFESLQGDARFARDVLKPMGCKITQTATSTTVSGPPVGTLKPLKHVDMEPMTDAFLTACVVAAISHDSDPNSANTTTIEGIANQRVKECNRILAMATELAKFGVKTTELPDGIQVHGLNSIKDLKVPSDSSGPVGVCTYDDHRVAMSFSLLAGMVNSQNERDEVATPVRILERHCTGKTWPGWWDVLHSELGAKLDGAEPLECTSKKNSKKSVVIIGMRAAGKTTISKWCASALGYKLVDLDELFEQQHNNQSVKQFVVENGWEKFREEETRIFKEVIQNYGDDGYVFSTGGGIVESAESRKALKDFASSGGYVLHLHRDIEETIVFLQSDPSRPAYVEEIREVWNRREGWYKECSNFSFFAPHCSAETEFQALRRSFSKYIATITGVREIEIPSGRSAFVCLTFDDLTEQTENLTPICYGCEAVEVRVDHLANYSADFVSKQLSILRKATDSIPIIFTVRTKKQGGNFPDEEFKTLRELYDIALKNGVEFLDLELTLPTDIQYEVINKRGNTKIIGSHHDFQGLYSWDDAEWENRFNQALTLDVDVVKFVGTAVNFEDNLRLEHFRDTHKNKPLIAVNMTSKGSISRVLNNVLTPVTSDLLPNSAAPGQLTVAQINKMYTSMGGIEPKELFVVGKPIGHSRSPILHNTGYEILGLPHKFDKFETESAQLVKEKLLDGNKNFGGAAVTIPLKLDIMQYMDELTDAAKIIGAVNTVIPLGNKKFKGDNTDWLGIRNALINNGVPEYVGHTAGLVIGAGGTSRAALYALHSLGCKKIFIINRTTSKLKPLIESLPSEFNIIGIESTKSIEEIKEHVGVAVSCVPADKPLDDELLSKLERFLVKGAHAAFVPTLLEAAYKPSVTPVMTISQDKYQWHVVPGSQMLVHQGVAQFEKWTGFKAPFKAIFDAVTKE</sequence>
<reference key="1">
    <citation type="journal article" date="2007" name="Proc. Natl. Acad. Sci. U.S.A.">
        <title>Genome sequencing and comparative analysis of Saccharomyces cerevisiae strain YJM789.</title>
        <authorList>
            <person name="Wei W."/>
            <person name="McCusker J.H."/>
            <person name="Hyman R.W."/>
            <person name="Jones T."/>
            <person name="Ning Y."/>
            <person name="Cao Z."/>
            <person name="Gu Z."/>
            <person name="Bruno D."/>
            <person name="Miranda M."/>
            <person name="Nguyen M."/>
            <person name="Wilhelmy J."/>
            <person name="Komp C."/>
            <person name="Tamse R."/>
            <person name="Wang X."/>
            <person name="Jia P."/>
            <person name="Luedi P."/>
            <person name="Oefner P.J."/>
            <person name="David L."/>
            <person name="Dietrich F.S."/>
            <person name="Li Y."/>
            <person name="Davis R.W."/>
            <person name="Steinmetz L.M."/>
        </authorList>
    </citation>
    <scope>NUCLEOTIDE SEQUENCE [LARGE SCALE GENOMIC DNA]</scope>
    <source>
        <strain>YJM789</strain>
    </source>
</reference>
<name>ARO1_YEAS7</name>
<comment type="function">
    <text evidence="1">The AROM polypeptide catalyzes 5 consecutive enzymatic reactions in prechorismate polyaromatic amino acid biosynthesis.</text>
</comment>
<comment type="catalytic activity">
    <reaction evidence="1">
        <text>7-phospho-2-dehydro-3-deoxy-D-arabino-heptonate = 3-dehydroquinate + phosphate</text>
        <dbReference type="Rhea" id="RHEA:21968"/>
        <dbReference type="ChEBI" id="CHEBI:32364"/>
        <dbReference type="ChEBI" id="CHEBI:43474"/>
        <dbReference type="ChEBI" id="CHEBI:58394"/>
        <dbReference type="EC" id="4.2.3.4"/>
    </reaction>
</comment>
<comment type="catalytic activity">
    <reaction evidence="1">
        <text>3-dehydroquinate = 3-dehydroshikimate + H2O</text>
        <dbReference type="Rhea" id="RHEA:21096"/>
        <dbReference type="ChEBI" id="CHEBI:15377"/>
        <dbReference type="ChEBI" id="CHEBI:16630"/>
        <dbReference type="ChEBI" id="CHEBI:32364"/>
        <dbReference type="EC" id="4.2.1.10"/>
    </reaction>
</comment>
<comment type="catalytic activity">
    <reaction evidence="1">
        <text>shikimate + NADP(+) = 3-dehydroshikimate + NADPH + H(+)</text>
        <dbReference type="Rhea" id="RHEA:17737"/>
        <dbReference type="ChEBI" id="CHEBI:15378"/>
        <dbReference type="ChEBI" id="CHEBI:16630"/>
        <dbReference type="ChEBI" id="CHEBI:36208"/>
        <dbReference type="ChEBI" id="CHEBI:57783"/>
        <dbReference type="ChEBI" id="CHEBI:58349"/>
        <dbReference type="EC" id="1.1.1.25"/>
    </reaction>
</comment>
<comment type="catalytic activity">
    <reaction evidence="1">
        <text>shikimate + ATP = 3-phosphoshikimate + ADP + H(+)</text>
        <dbReference type="Rhea" id="RHEA:13121"/>
        <dbReference type="ChEBI" id="CHEBI:15378"/>
        <dbReference type="ChEBI" id="CHEBI:30616"/>
        <dbReference type="ChEBI" id="CHEBI:36208"/>
        <dbReference type="ChEBI" id="CHEBI:145989"/>
        <dbReference type="ChEBI" id="CHEBI:456216"/>
        <dbReference type="EC" id="2.7.1.71"/>
    </reaction>
</comment>
<comment type="catalytic activity">
    <reaction evidence="1">
        <text>3-phosphoshikimate + phosphoenolpyruvate = 5-O-(1-carboxyvinyl)-3-phosphoshikimate + phosphate</text>
        <dbReference type="Rhea" id="RHEA:21256"/>
        <dbReference type="ChEBI" id="CHEBI:43474"/>
        <dbReference type="ChEBI" id="CHEBI:57701"/>
        <dbReference type="ChEBI" id="CHEBI:58702"/>
        <dbReference type="ChEBI" id="CHEBI:145989"/>
        <dbReference type="EC" id="2.5.1.19"/>
    </reaction>
</comment>
<comment type="cofactor">
    <cofactor>
        <name>Zn(2+)</name>
        <dbReference type="ChEBI" id="CHEBI:29105"/>
    </cofactor>
    <text>Binds 2 Zn(2+) ions per subunit.</text>
</comment>
<comment type="pathway">
    <text evidence="1">Metabolic intermediate biosynthesis; chorismate biosynthesis; chorismate from D-erythrose 4-phosphate and phosphoenolpyruvate: step 2/7.</text>
</comment>
<comment type="pathway">
    <text evidence="1">Metabolic intermediate biosynthesis; chorismate biosynthesis; chorismate from D-erythrose 4-phosphate and phosphoenolpyruvate: step 3/7.</text>
</comment>
<comment type="pathway">
    <text evidence="1">Metabolic intermediate biosynthesis; chorismate biosynthesis; chorismate from D-erythrose 4-phosphate and phosphoenolpyruvate: step 4/7.</text>
</comment>
<comment type="pathway">
    <text evidence="1">Metabolic intermediate biosynthesis; chorismate biosynthesis; chorismate from D-erythrose 4-phosphate and phosphoenolpyruvate: step 5/7.</text>
</comment>
<comment type="pathway">
    <text evidence="1">Metabolic intermediate biosynthesis; chorismate biosynthesis; chorismate from D-erythrose 4-phosphate and phosphoenolpyruvate: step 6/7.</text>
</comment>
<comment type="subunit">
    <text evidence="1">Homodimer.</text>
</comment>
<comment type="subcellular location">
    <subcellularLocation>
        <location evidence="1">Cytoplasm</location>
    </subcellularLocation>
</comment>
<comment type="similarity">
    <text evidence="1">In the N-terminal section; belongs to the sugar phosphate cyclases superfamily. Dehydroquinate synthase family.</text>
</comment>
<comment type="similarity">
    <text evidence="1">In the 2nd section; belongs to the EPSP synthase family.</text>
</comment>
<comment type="similarity">
    <text evidence="1">In the 3rd section; belongs to the shikimate kinase family.</text>
</comment>
<comment type="similarity">
    <text evidence="1">In the 4th section; belongs to the type-I 3-dehydroquinase family.</text>
</comment>
<comment type="similarity">
    <text evidence="1">In the C-terminal section; belongs to the shikimate dehydrogenase family.</text>
</comment>
<proteinExistence type="inferred from homology"/>
<protein>
    <recommendedName>
        <fullName evidence="1">Pentafunctional AROM polypeptide</fullName>
    </recommendedName>
    <domain>
        <recommendedName>
            <fullName evidence="1">3-dehydroquinate synthase</fullName>
            <shortName evidence="1">DHQS</shortName>
            <ecNumber evidence="1">4.2.3.4</ecNumber>
        </recommendedName>
    </domain>
    <domain>
        <recommendedName>
            <fullName evidence="1">3-phosphoshikimate 1-carboxyvinyltransferase</fullName>
            <ecNumber evidence="1">2.5.1.19</ecNumber>
        </recommendedName>
        <alternativeName>
            <fullName evidence="1">5-enolpyruvylshikimate-3-phosphate synthase</fullName>
            <shortName evidence="1">EPSP synthase</shortName>
            <shortName evidence="1">EPSPS</shortName>
        </alternativeName>
    </domain>
    <domain>
        <recommendedName>
            <fullName evidence="1">Shikimate kinase</fullName>
            <shortName evidence="1">SK</shortName>
            <ecNumber evidence="1">2.7.1.71</ecNumber>
        </recommendedName>
    </domain>
    <domain>
        <recommendedName>
            <fullName evidence="1">3-dehydroquinate dehydratase</fullName>
            <shortName evidence="1">3-dehydroquinase</shortName>
            <ecNumber evidence="1">4.2.1.10</ecNumber>
        </recommendedName>
    </domain>
    <domain>
        <recommendedName>
            <fullName evidence="1">Shikimate dehydrogenase</fullName>
            <ecNumber evidence="1">1.1.1.25</ecNumber>
        </recommendedName>
    </domain>
</protein>
<accession>A6ZY89</accession>
<evidence type="ECO:0000255" key="1">
    <source>
        <dbReference type="HAMAP-Rule" id="MF_03143"/>
    </source>
</evidence>
<feature type="chain" id="PRO_0000406750" description="Pentafunctional AROM polypeptide">
    <location>
        <begin position="1"/>
        <end position="1588"/>
    </location>
</feature>
<feature type="region of interest" description="3-dehydroquinate synthase">
    <location>
        <begin position="1"/>
        <end position="392"/>
    </location>
</feature>
<feature type="region of interest" description="EPSP synthase">
    <location>
        <begin position="405"/>
        <end position="871"/>
    </location>
</feature>
<feature type="region of interest" description="Shikimate kinase">
    <location>
        <begin position="890"/>
        <end position="1080"/>
    </location>
</feature>
<feature type="region of interest" description="3-dehydroquinase">
    <location>
        <begin position="1081"/>
        <end position="1293"/>
    </location>
</feature>
<feature type="region of interest" description="Shikimate dehydrogenase">
    <location>
        <begin position="1306"/>
        <end position="1588"/>
    </location>
</feature>
<feature type="active site" description="Proton acceptor; for 3-dehydroquinate synthase activity" evidence="1">
    <location>
        <position position="268"/>
    </location>
</feature>
<feature type="active site" description="Proton acceptor; for 3-dehydroquinate synthase activity" evidence="1">
    <location>
        <position position="283"/>
    </location>
</feature>
<feature type="active site" description="For EPSP synthase activity" evidence="1">
    <location>
        <position position="853"/>
    </location>
</feature>
<feature type="active site" description="Proton acceptor; for 3-dehydroquinate dehydratase activity" evidence="1">
    <location>
        <position position="1198"/>
    </location>
</feature>
<feature type="active site" description="Schiff-base intermediate with substrate; for 3-dehydroquinate dehydratase activity" evidence="1">
    <location>
        <position position="1227"/>
    </location>
</feature>
<feature type="binding site" evidence="1">
    <location>
        <begin position="43"/>
        <end position="45"/>
    </location>
    <ligand>
        <name>NAD(+)</name>
        <dbReference type="ChEBI" id="CHEBI:57540"/>
    </ligand>
</feature>
<feature type="binding site" evidence="1">
    <location>
        <begin position="78"/>
        <end position="81"/>
    </location>
    <ligand>
        <name>NAD(+)</name>
        <dbReference type="ChEBI" id="CHEBI:57540"/>
    </ligand>
</feature>
<feature type="binding site" evidence="1">
    <location>
        <begin position="109"/>
        <end position="111"/>
    </location>
    <ligand>
        <name>NAD(+)</name>
        <dbReference type="ChEBI" id="CHEBI:57540"/>
    </ligand>
</feature>
<feature type="binding site" evidence="1">
    <location>
        <position position="114"/>
    </location>
    <ligand>
        <name>NAD(+)</name>
        <dbReference type="ChEBI" id="CHEBI:57540"/>
    </ligand>
</feature>
<feature type="binding site" evidence="1">
    <location>
        <position position="125"/>
    </location>
    <ligand>
        <name>7-phospho-2-dehydro-3-deoxy-D-arabino-heptonate</name>
        <dbReference type="ChEBI" id="CHEBI:58394"/>
    </ligand>
</feature>
<feature type="binding site" evidence="1">
    <location>
        <begin position="134"/>
        <end position="135"/>
    </location>
    <ligand>
        <name>NAD(+)</name>
        <dbReference type="ChEBI" id="CHEBI:57540"/>
    </ligand>
</feature>
<feature type="binding site" evidence="1">
    <location>
        <position position="141"/>
    </location>
    <ligand>
        <name>7-phospho-2-dehydro-3-deoxy-D-arabino-heptonate</name>
        <dbReference type="ChEBI" id="CHEBI:58394"/>
    </ligand>
</feature>
<feature type="binding site" evidence="1">
    <location>
        <position position="147"/>
    </location>
    <ligand>
        <name>7-phospho-2-dehydro-3-deoxy-D-arabino-heptonate</name>
        <dbReference type="ChEBI" id="CHEBI:58394"/>
    </ligand>
</feature>
<feature type="binding site" evidence="1">
    <location>
        <position position="156"/>
    </location>
    <ligand>
        <name>NAD(+)</name>
        <dbReference type="ChEBI" id="CHEBI:57540"/>
    </ligand>
</feature>
<feature type="binding site" evidence="1">
    <location>
        <position position="157"/>
    </location>
    <ligand>
        <name>7-phospho-2-dehydro-3-deoxy-D-arabino-heptonate</name>
        <dbReference type="ChEBI" id="CHEBI:58394"/>
    </ligand>
</feature>
<feature type="binding site" evidence="1">
    <location>
        <begin position="174"/>
        <end position="177"/>
    </location>
    <ligand>
        <name>NAD(+)</name>
        <dbReference type="ChEBI" id="CHEBI:57540"/>
    </ligand>
</feature>
<feature type="binding site" evidence="1">
    <location>
        <position position="185"/>
    </location>
    <ligand>
        <name>NAD(+)</name>
        <dbReference type="ChEBI" id="CHEBI:57540"/>
    </ligand>
</feature>
<feature type="binding site" evidence="1">
    <location>
        <begin position="189"/>
        <end position="192"/>
    </location>
    <ligand>
        <name>7-phospho-2-dehydro-3-deoxy-D-arabino-heptonate</name>
        <dbReference type="ChEBI" id="CHEBI:58394"/>
    </ligand>
</feature>
<feature type="binding site" evidence="1">
    <location>
        <position position="189"/>
    </location>
    <ligand>
        <name>Zn(2+)</name>
        <dbReference type="ChEBI" id="CHEBI:29105"/>
        <note>catalytic</note>
    </ligand>
</feature>
<feature type="binding site" evidence="1">
    <location>
        <position position="258"/>
    </location>
    <ligand>
        <name>7-phospho-2-dehydro-3-deoxy-D-arabino-heptonate</name>
        <dbReference type="ChEBI" id="CHEBI:58394"/>
    </ligand>
</feature>
<feature type="binding site" evidence="1">
    <location>
        <begin position="272"/>
        <end position="276"/>
    </location>
    <ligand>
        <name>7-phospho-2-dehydro-3-deoxy-D-arabino-heptonate</name>
        <dbReference type="ChEBI" id="CHEBI:58394"/>
    </ligand>
</feature>
<feature type="binding site" evidence="1">
    <location>
        <position position="279"/>
    </location>
    <ligand>
        <name>7-phospho-2-dehydro-3-deoxy-D-arabino-heptonate</name>
        <dbReference type="ChEBI" id="CHEBI:58394"/>
    </ligand>
</feature>
<feature type="binding site" evidence="1">
    <location>
        <position position="279"/>
    </location>
    <ligand>
        <name>Zn(2+)</name>
        <dbReference type="ChEBI" id="CHEBI:29105"/>
        <note>catalytic</note>
    </ligand>
</feature>
<feature type="binding site" evidence="1">
    <location>
        <position position="295"/>
    </location>
    <ligand>
        <name>7-phospho-2-dehydro-3-deoxy-D-arabino-heptonate</name>
        <dbReference type="ChEBI" id="CHEBI:58394"/>
    </ligand>
</feature>
<feature type="binding site" evidence="1">
    <location>
        <position position="295"/>
    </location>
    <ligand>
        <name>Zn(2+)</name>
        <dbReference type="ChEBI" id="CHEBI:29105"/>
        <note>catalytic</note>
    </ligand>
</feature>
<feature type="binding site" evidence="1">
    <location>
        <position position="364"/>
    </location>
    <ligand>
        <name>7-phospho-2-dehydro-3-deoxy-D-arabino-heptonate</name>
        <dbReference type="ChEBI" id="CHEBI:58394"/>
    </ligand>
</feature>
<feature type="binding site" evidence="1">
    <location>
        <begin position="895"/>
        <end position="902"/>
    </location>
    <ligand>
        <name>ATP</name>
        <dbReference type="ChEBI" id="CHEBI:30616"/>
    </ligand>
</feature>
<gene>
    <name evidence="1" type="primary">ARO1</name>
    <name type="ORF">SCY_1027</name>
</gene>
<keyword id="KW-0028">Amino-acid biosynthesis</keyword>
<keyword id="KW-0057">Aromatic amino acid biosynthesis</keyword>
<keyword id="KW-0067">ATP-binding</keyword>
<keyword id="KW-0963">Cytoplasm</keyword>
<keyword id="KW-0418">Kinase</keyword>
<keyword id="KW-0456">Lyase</keyword>
<keyword id="KW-0479">Metal-binding</keyword>
<keyword id="KW-0511">Multifunctional enzyme</keyword>
<keyword id="KW-0521">NADP</keyword>
<keyword id="KW-0547">Nucleotide-binding</keyword>
<keyword id="KW-0560">Oxidoreductase</keyword>
<keyword id="KW-0808">Transferase</keyword>
<keyword id="KW-0862">Zinc</keyword>
<organism>
    <name type="scientific">Saccharomyces cerevisiae (strain YJM789)</name>
    <name type="common">Baker's yeast</name>
    <dbReference type="NCBI Taxonomy" id="307796"/>
    <lineage>
        <taxon>Eukaryota</taxon>
        <taxon>Fungi</taxon>
        <taxon>Dikarya</taxon>
        <taxon>Ascomycota</taxon>
        <taxon>Saccharomycotina</taxon>
        <taxon>Saccharomycetes</taxon>
        <taxon>Saccharomycetales</taxon>
        <taxon>Saccharomycetaceae</taxon>
        <taxon>Saccharomyces</taxon>
    </lineage>
</organism>
<dbReference type="EC" id="4.2.3.4" evidence="1"/>
<dbReference type="EC" id="2.5.1.19" evidence="1"/>
<dbReference type="EC" id="2.7.1.71" evidence="1"/>
<dbReference type="EC" id="4.2.1.10" evidence="1"/>
<dbReference type="EC" id="1.1.1.25" evidence="1"/>
<dbReference type="EMBL" id="AAFW02000145">
    <property type="protein sequence ID" value="EDN60469.1"/>
    <property type="molecule type" value="Genomic_DNA"/>
</dbReference>
<dbReference type="SMR" id="A6ZY89"/>
<dbReference type="HOGENOM" id="CLU_001201_1_2_1"/>
<dbReference type="OrthoDB" id="21150at4893"/>
<dbReference type="UniPathway" id="UPA00053">
    <property type="reaction ID" value="UER00085"/>
</dbReference>
<dbReference type="UniPathway" id="UPA00053">
    <property type="reaction ID" value="UER00086"/>
</dbReference>
<dbReference type="UniPathway" id="UPA00053">
    <property type="reaction ID" value="UER00087"/>
</dbReference>
<dbReference type="UniPathway" id="UPA00053">
    <property type="reaction ID" value="UER00088"/>
</dbReference>
<dbReference type="UniPathway" id="UPA00053">
    <property type="reaction ID" value="UER00089"/>
</dbReference>
<dbReference type="Proteomes" id="UP000007060">
    <property type="component" value="Unassembled WGS sequence"/>
</dbReference>
<dbReference type="GO" id="GO:0005737">
    <property type="term" value="C:cytoplasm"/>
    <property type="evidence" value="ECO:0007669"/>
    <property type="project" value="UniProtKB-SubCell"/>
</dbReference>
<dbReference type="GO" id="GO:0003855">
    <property type="term" value="F:3-dehydroquinate dehydratase activity"/>
    <property type="evidence" value="ECO:0007669"/>
    <property type="project" value="UniProtKB-UniRule"/>
</dbReference>
<dbReference type="GO" id="GO:0003856">
    <property type="term" value="F:3-dehydroquinate synthase activity"/>
    <property type="evidence" value="ECO:0007669"/>
    <property type="project" value="UniProtKB-UniRule"/>
</dbReference>
<dbReference type="GO" id="GO:0003866">
    <property type="term" value="F:3-phosphoshikimate 1-carboxyvinyltransferase activity"/>
    <property type="evidence" value="ECO:0007669"/>
    <property type="project" value="UniProtKB-UniRule"/>
</dbReference>
<dbReference type="GO" id="GO:0005524">
    <property type="term" value="F:ATP binding"/>
    <property type="evidence" value="ECO:0007669"/>
    <property type="project" value="UniProtKB-UniRule"/>
</dbReference>
<dbReference type="GO" id="GO:0046872">
    <property type="term" value="F:metal ion binding"/>
    <property type="evidence" value="ECO:0007669"/>
    <property type="project" value="UniProtKB-UniRule"/>
</dbReference>
<dbReference type="GO" id="GO:0004764">
    <property type="term" value="F:shikimate 3-dehydrogenase (NADP+) activity"/>
    <property type="evidence" value="ECO:0007669"/>
    <property type="project" value="UniProtKB-UniRule"/>
</dbReference>
<dbReference type="GO" id="GO:0004765">
    <property type="term" value="F:shikimate kinase activity"/>
    <property type="evidence" value="ECO:0007669"/>
    <property type="project" value="UniProtKB-UniRule"/>
</dbReference>
<dbReference type="GO" id="GO:0008652">
    <property type="term" value="P:amino acid biosynthetic process"/>
    <property type="evidence" value="ECO:0007669"/>
    <property type="project" value="UniProtKB-KW"/>
</dbReference>
<dbReference type="GO" id="GO:0009073">
    <property type="term" value="P:aromatic amino acid family biosynthetic process"/>
    <property type="evidence" value="ECO:0007669"/>
    <property type="project" value="UniProtKB-UniRule"/>
</dbReference>
<dbReference type="GO" id="GO:0009423">
    <property type="term" value="P:chorismate biosynthetic process"/>
    <property type="evidence" value="ECO:0007669"/>
    <property type="project" value="UniProtKB-UniRule"/>
</dbReference>
<dbReference type="CDD" id="cd00502">
    <property type="entry name" value="DHQase_I"/>
    <property type="match status" value="1"/>
</dbReference>
<dbReference type="CDD" id="cd08195">
    <property type="entry name" value="DHQS"/>
    <property type="match status" value="1"/>
</dbReference>
<dbReference type="CDD" id="cd01556">
    <property type="entry name" value="EPSP_synthase"/>
    <property type="match status" value="1"/>
</dbReference>
<dbReference type="CDD" id="cd01065">
    <property type="entry name" value="NAD_bind_Shikimate_DH"/>
    <property type="match status" value="1"/>
</dbReference>
<dbReference type="CDD" id="cd00464">
    <property type="entry name" value="SK"/>
    <property type="match status" value="1"/>
</dbReference>
<dbReference type="FunFam" id="1.20.1090.10:FF:000007">
    <property type="entry name" value="Pentafunctional AROM polypeptide"/>
    <property type="match status" value="1"/>
</dbReference>
<dbReference type="FunFam" id="3.20.20.70:FF:000135">
    <property type="entry name" value="Pentafunctional AROM polypeptide"/>
    <property type="match status" value="1"/>
</dbReference>
<dbReference type="FunFam" id="3.40.50.10860:FF:000015">
    <property type="entry name" value="Pentafunctional AROM polypeptide"/>
    <property type="match status" value="1"/>
</dbReference>
<dbReference type="FunFam" id="3.40.50.1970:FF:000007">
    <property type="entry name" value="Pentafunctional AROM polypeptide"/>
    <property type="match status" value="1"/>
</dbReference>
<dbReference type="FunFam" id="3.40.50.300:FF:001256">
    <property type="entry name" value="Pentafunctional AROM polypeptide"/>
    <property type="match status" value="1"/>
</dbReference>
<dbReference type="FunFam" id="3.40.50.720:FF:000484">
    <property type="entry name" value="Pentafunctional AROM polypeptide"/>
    <property type="match status" value="1"/>
</dbReference>
<dbReference type="FunFam" id="3.65.10.10:FF:000007">
    <property type="entry name" value="Pentafunctional AROM polypeptide"/>
    <property type="match status" value="1"/>
</dbReference>
<dbReference type="FunFam" id="3.65.10.10:FF:000008">
    <property type="entry name" value="Pentafunctional AROM polypeptide"/>
    <property type="match status" value="1"/>
</dbReference>
<dbReference type="Gene3D" id="3.40.50.1970">
    <property type="match status" value="1"/>
</dbReference>
<dbReference type="Gene3D" id="3.20.20.70">
    <property type="entry name" value="Aldolase class I"/>
    <property type="match status" value="1"/>
</dbReference>
<dbReference type="Gene3D" id="1.20.1090.10">
    <property type="entry name" value="Dehydroquinate synthase-like - alpha domain"/>
    <property type="match status" value="1"/>
</dbReference>
<dbReference type="Gene3D" id="3.65.10.10">
    <property type="entry name" value="Enolpyruvate transferase domain"/>
    <property type="match status" value="2"/>
</dbReference>
<dbReference type="Gene3D" id="3.40.50.10860">
    <property type="entry name" value="Leucine Dehydrogenase, chain A, domain 1"/>
    <property type="match status" value="1"/>
</dbReference>
<dbReference type="Gene3D" id="3.40.50.720">
    <property type="entry name" value="NAD(P)-binding Rossmann-like Domain"/>
    <property type="match status" value="1"/>
</dbReference>
<dbReference type="Gene3D" id="3.40.50.300">
    <property type="entry name" value="P-loop containing nucleotide triphosphate hydrolases"/>
    <property type="match status" value="1"/>
</dbReference>
<dbReference type="HAMAP" id="MF_00210">
    <property type="entry name" value="EPSP_synth"/>
    <property type="match status" value="1"/>
</dbReference>
<dbReference type="HAMAP" id="MF_03143">
    <property type="entry name" value="Pentafunct_AroM"/>
    <property type="match status" value="1"/>
</dbReference>
<dbReference type="HAMAP" id="MF_00109">
    <property type="entry name" value="Shikimate_kinase"/>
    <property type="match status" value="1"/>
</dbReference>
<dbReference type="InterPro" id="IPR018508">
    <property type="entry name" value="3-dehydroquinate_DH_AS"/>
</dbReference>
<dbReference type="InterPro" id="IPR013785">
    <property type="entry name" value="Aldolase_TIM"/>
</dbReference>
<dbReference type="InterPro" id="IPR046346">
    <property type="entry name" value="Aminoacid_DH-like_N_sf"/>
</dbReference>
<dbReference type="InterPro" id="IPR016037">
    <property type="entry name" value="DHQ_synth_AroB"/>
</dbReference>
<dbReference type="InterPro" id="IPR030960">
    <property type="entry name" value="DHQS/DOIS_N"/>
</dbReference>
<dbReference type="InterPro" id="IPR056179">
    <property type="entry name" value="DHQS_C"/>
</dbReference>
<dbReference type="InterPro" id="IPR001381">
    <property type="entry name" value="DHquinase_I"/>
</dbReference>
<dbReference type="InterPro" id="IPR001986">
    <property type="entry name" value="Enolpyruvate_Tfrase_dom"/>
</dbReference>
<dbReference type="InterPro" id="IPR036968">
    <property type="entry name" value="Enolpyruvate_Tfrase_sf"/>
</dbReference>
<dbReference type="InterPro" id="IPR006264">
    <property type="entry name" value="EPSP_synthase"/>
</dbReference>
<dbReference type="InterPro" id="IPR023193">
    <property type="entry name" value="EPSP_synthase_CS"/>
</dbReference>
<dbReference type="InterPro" id="IPR036291">
    <property type="entry name" value="NAD(P)-bd_dom_sf"/>
</dbReference>
<dbReference type="InterPro" id="IPR027417">
    <property type="entry name" value="P-loop_NTPase"/>
</dbReference>
<dbReference type="InterPro" id="IPR008289">
    <property type="entry name" value="Pentafunct_AroM"/>
</dbReference>
<dbReference type="InterPro" id="IPR013792">
    <property type="entry name" value="RNA3'P_cycl/enolpyr_Trfase_a/b"/>
</dbReference>
<dbReference type="InterPro" id="IPR041121">
    <property type="entry name" value="SDH_C"/>
</dbReference>
<dbReference type="InterPro" id="IPR031322">
    <property type="entry name" value="Shikimate/glucono_kinase"/>
</dbReference>
<dbReference type="InterPro" id="IPR013708">
    <property type="entry name" value="Shikimate_DH-bd_N"/>
</dbReference>
<dbReference type="InterPro" id="IPR010110">
    <property type="entry name" value="Shikimate_DH_AroM-type"/>
</dbReference>
<dbReference type="InterPro" id="IPR000623">
    <property type="entry name" value="Shikimate_kinase/TSH1"/>
</dbReference>
<dbReference type="InterPro" id="IPR023000">
    <property type="entry name" value="Shikimate_kinase_CS"/>
</dbReference>
<dbReference type="InterPro" id="IPR006151">
    <property type="entry name" value="Shikm_DH/Glu-tRNA_Rdtase"/>
</dbReference>
<dbReference type="NCBIfam" id="TIGR01356">
    <property type="entry name" value="aroA"/>
    <property type="match status" value="1"/>
</dbReference>
<dbReference type="NCBIfam" id="TIGR01357">
    <property type="entry name" value="aroB"/>
    <property type="match status" value="1"/>
</dbReference>
<dbReference type="NCBIfam" id="TIGR01093">
    <property type="entry name" value="aroD"/>
    <property type="match status" value="1"/>
</dbReference>
<dbReference type="NCBIfam" id="TIGR01809">
    <property type="entry name" value="Shik-DH-AROM"/>
    <property type="match status" value="1"/>
</dbReference>
<dbReference type="PANTHER" id="PTHR21090">
    <property type="entry name" value="AROM/DEHYDROQUINATE SYNTHASE"/>
    <property type="match status" value="1"/>
</dbReference>
<dbReference type="PANTHER" id="PTHR21090:SF5">
    <property type="entry name" value="PENTAFUNCTIONAL AROM POLYPEPTIDE"/>
    <property type="match status" value="1"/>
</dbReference>
<dbReference type="Pfam" id="PF01761">
    <property type="entry name" value="DHQ_synthase"/>
    <property type="match status" value="1"/>
</dbReference>
<dbReference type="Pfam" id="PF24621">
    <property type="entry name" value="DHQS_C"/>
    <property type="match status" value="1"/>
</dbReference>
<dbReference type="Pfam" id="PF01487">
    <property type="entry name" value="DHquinase_I"/>
    <property type="match status" value="1"/>
</dbReference>
<dbReference type="Pfam" id="PF00275">
    <property type="entry name" value="EPSP_synthase"/>
    <property type="match status" value="1"/>
</dbReference>
<dbReference type="Pfam" id="PF18317">
    <property type="entry name" value="SDH_C"/>
    <property type="match status" value="1"/>
</dbReference>
<dbReference type="Pfam" id="PF01488">
    <property type="entry name" value="Shikimate_DH"/>
    <property type="match status" value="1"/>
</dbReference>
<dbReference type="Pfam" id="PF08501">
    <property type="entry name" value="Shikimate_dh_N"/>
    <property type="match status" value="1"/>
</dbReference>
<dbReference type="Pfam" id="PF01202">
    <property type="entry name" value="SKI"/>
    <property type="match status" value="1"/>
</dbReference>
<dbReference type="PIRSF" id="PIRSF000514">
    <property type="entry name" value="Pentafunct_AroM"/>
    <property type="match status" value="1"/>
</dbReference>
<dbReference type="PRINTS" id="PR01100">
    <property type="entry name" value="SHIKIMTKNASE"/>
</dbReference>
<dbReference type="SUPFAM" id="SSF51569">
    <property type="entry name" value="Aldolase"/>
    <property type="match status" value="1"/>
</dbReference>
<dbReference type="SUPFAM" id="SSF53223">
    <property type="entry name" value="Aminoacid dehydrogenase-like, N-terminal domain"/>
    <property type="match status" value="1"/>
</dbReference>
<dbReference type="SUPFAM" id="SSF56796">
    <property type="entry name" value="Dehydroquinate synthase-like"/>
    <property type="match status" value="1"/>
</dbReference>
<dbReference type="SUPFAM" id="SSF55205">
    <property type="entry name" value="EPT/RTPC-like"/>
    <property type="match status" value="1"/>
</dbReference>
<dbReference type="SUPFAM" id="SSF51735">
    <property type="entry name" value="NAD(P)-binding Rossmann-fold domains"/>
    <property type="match status" value="1"/>
</dbReference>
<dbReference type="SUPFAM" id="SSF52540">
    <property type="entry name" value="P-loop containing nucleoside triphosphate hydrolases"/>
    <property type="match status" value="1"/>
</dbReference>
<dbReference type="PROSITE" id="PS01028">
    <property type="entry name" value="DEHYDROQUINASE_I"/>
    <property type="match status" value="1"/>
</dbReference>
<dbReference type="PROSITE" id="PS00104">
    <property type="entry name" value="EPSP_SYNTHASE_1"/>
    <property type="match status" value="1"/>
</dbReference>
<dbReference type="PROSITE" id="PS00885">
    <property type="entry name" value="EPSP_SYNTHASE_2"/>
    <property type="match status" value="1"/>
</dbReference>
<dbReference type="PROSITE" id="PS01128">
    <property type="entry name" value="SHIKIMATE_KINASE"/>
    <property type="match status" value="1"/>
</dbReference>